<name>COBQ_METNO</name>
<organism>
    <name type="scientific">Methylobacterium nodulans (strain LMG 21967 / CNCM I-2342 / ORS 2060)</name>
    <dbReference type="NCBI Taxonomy" id="460265"/>
    <lineage>
        <taxon>Bacteria</taxon>
        <taxon>Pseudomonadati</taxon>
        <taxon>Pseudomonadota</taxon>
        <taxon>Alphaproteobacteria</taxon>
        <taxon>Hyphomicrobiales</taxon>
        <taxon>Methylobacteriaceae</taxon>
        <taxon>Methylobacterium</taxon>
    </lineage>
</organism>
<comment type="function">
    <text evidence="1">Catalyzes amidations at positions B, D, E, and G on adenosylcobyrinic A,C-diamide. NH(2) groups are provided by glutamine, and one molecule of ATP is hydrogenolyzed for each amidation.</text>
</comment>
<comment type="pathway">
    <text evidence="1">Cofactor biosynthesis; adenosylcobalamin biosynthesis.</text>
</comment>
<comment type="similarity">
    <text evidence="1">Belongs to the CobB/CobQ family. CobQ subfamily.</text>
</comment>
<gene>
    <name evidence="1" type="primary">cobQ</name>
    <name type="ordered locus">Mnod_2141</name>
</gene>
<sequence length="489" mass="51414">MTARTLMIQGTGSDVGKSLIVAGLSRAFARRGLRVRPFKPQNMSNNAAVTAEGGEIGRAQALQARAACVAPSVHMNPVLLKPQSETGSQVVVQGRRVGTAKAREYQAWKPRLLSAVLDSFDHLRAEADLVLVEGAGSASEVNLRAGDIANMGFARASGTPVVLLGDIDRGGVIASLVGTKAVLDPDDAAMIRGFLVNRFRGDPSLFADGMALIAARTGWAALGLIPHFPEAARLPAEDVLGLKGSVRPSARPGARVIAVPVLPRIANFDDLDPLRAEPGVSVVLVEPGRPLPAEADLVLLPGSKTTIADLIAFRAEGWDIDLAAHVRRGGRVLGLCGGYQMLGRRIEDPHGIEGEVRAVDGLGLLDVVTVMTPDKRLAAVTGASLPDETPFCGYEMHLGETRGPDAARPLLRFADGRPDGAVSADGRVCGTYVHGLFADDRQRALWLERLGTSSAGEAYEAGIDAVLDRLAEHLERHVACDALLALAAG</sequence>
<feature type="chain" id="PRO_1000116908" description="Cobyric acid synthase">
    <location>
        <begin position="1"/>
        <end position="489"/>
    </location>
</feature>
<feature type="domain" description="GATase cobBQ-type" evidence="1">
    <location>
        <begin position="254"/>
        <end position="442"/>
    </location>
</feature>
<feature type="active site" description="Nucleophile" evidence="1">
    <location>
        <position position="336"/>
    </location>
</feature>
<feature type="active site" evidence="1">
    <location>
        <position position="434"/>
    </location>
</feature>
<dbReference type="EMBL" id="CP001349">
    <property type="protein sequence ID" value="ACL57124.1"/>
    <property type="molecule type" value="Genomic_DNA"/>
</dbReference>
<dbReference type="SMR" id="B8IUQ6"/>
<dbReference type="STRING" id="460265.Mnod_2141"/>
<dbReference type="KEGG" id="mno:Mnod_2141"/>
<dbReference type="eggNOG" id="COG1492">
    <property type="taxonomic scope" value="Bacteria"/>
</dbReference>
<dbReference type="HOGENOM" id="CLU_019250_2_2_5"/>
<dbReference type="UniPathway" id="UPA00148"/>
<dbReference type="Proteomes" id="UP000008207">
    <property type="component" value="Chromosome"/>
</dbReference>
<dbReference type="GO" id="GO:0015420">
    <property type="term" value="F:ABC-type vitamin B12 transporter activity"/>
    <property type="evidence" value="ECO:0007669"/>
    <property type="project" value="UniProtKB-UniRule"/>
</dbReference>
<dbReference type="GO" id="GO:0003824">
    <property type="term" value="F:catalytic activity"/>
    <property type="evidence" value="ECO:0007669"/>
    <property type="project" value="InterPro"/>
</dbReference>
<dbReference type="GO" id="GO:0009236">
    <property type="term" value="P:cobalamin biosynthetic process"/>
    <property type="evidence" value="ECO:0007669"/>
    <property type="project" value="UniProtKB-UniRule"/>
</dbReference>
<dbReference type="CDD" id="cd01750">
    <property type="entry name" value="GATase1_CobQ"/>
    <property type="match status" value="1"/>
</dbReference>
<dbReference type="Gene3D" id="3.40.50.880">
    <property type="match status" value="1"/>
</dbReference>
<dbReference type="Gene3D" id="3.40.50.300">
    <property type="entry name" value="P-loop containing nucleotide triphosphate hydrolases"/>
    <property type="match status" value="1"/>
</dbReference>
<dbReference type="HAMAP" id="MF_00028">
    <property type="entry name" value="CobQ"/>
    <property type="match status" value="1"/>
</dbReference>
<dbReference type="InterPro" id="IPR029062">
    <property type="entry name" value="Class_I_gatase-like"/>
</dbReference>
<dbReference type="InterPro" id="IPR002586">
    <property type="entry name" value="CobQ/CobB/MinD/ParA_Nub-bd_dom"/>
</dbReference>
<dbReference type="InterPro" id="IPR033949">
    <property type="entry name" value="CobQ_GATase1"/>
</dbReference>
<dbReference type="InterPro" id="IPR004459">
    <property type="entry name" value="CobQ_synth"/>
</dbReference>
<dbReference type="InterPro" id="IPR011698">
    <property type="entry name" value="GATase_3"/>
</dbReference>
<dbReference type="InterPro" id="IPR027417">
    <property type="entry name" value="P-loop_NTPase"/>
</dbReference>
<dbReference type="NCBIfam" id="TIGR00313">
    <property type="entry name" value="cobQ"/>
    <property type="match status" value="1"/>
</dbReference>
<dbReference type="NCBIfam" id="NF001989">
    <property type="entry name" value="PRK00784.1"/>
    <property type="match status" value="1"/>
</dbReference>
<dbReference type="PANTHER" id="PTHR21343:SF1">
    <property type="entry name" value="COBYRIC ACID SYNTHASE"/>
    <property type="match status" value="1"/>
</dbReference>
<dbReference type="PANTHER" id="PTHR21343">
    <property type="entry name" value="DETHIOBIOTIN SYNTHETASE"/>
    <property type="match status" value="1"/>
</dbReference>
<dbReference type="Pfam" id="PF01656">
    <property type="entry name" value="CbiA"/>
    <property type="match status" value="1"/>
</dbReference>
<dbReference type="Pfam" id="PF07685">
    <property type="entry name" value="GATase_3"/>
    <property type="match status" value="1"/>
</dbReference>
<dbReference type="SUPFAM" id="SSF52317">
    <property type="entry name" value="Class I glutamine amidotransferase-like"/>
    <property type="match status" value="1"/>
</dbReference>
<dbReference type="SUPFAM" id="SSF52540">
    <property type="entry name" value="P-loop containing nucleoside triphosphate hydrolases"/>
    <property type="match status" value="1"/>
</dbReference>
<dbReference type="PROSITE" id="PS51274">
    <property type="entry name" value="GATASE_COBBQ"/>
    <property type="match status" value="1"/>
</dbReference>
<accession>B8IUQ6</accession>
<protein>
    <recommendedName>
        <fullName evidence="1">Cobyric acid synthase</fullName>
    </recommendedName>
</protein>
<evidence type="ECO:0000255" key="1">
    <source>
        <dbReference type="HAMAP-Rule" id="MF_00028"/>
    </source>
</evidence>
<proteinExistence type="inferred from homology"/>
<reference key="1">
    <citation type="submission" date="2009-01" db="EMBL/GenBank/DDBJ databases">
        <title>Complete sequence of chromosome of Methylobacterium nodulans ORS 2060.</title>
        <authorList>
            <consortium name="US DOE Joint Genome Institute"/>
            <person name="Lucas S."/>
            <person name="Copeland A."/>
            <person name="Lapidus A."/>
            <person name="Glavina del Rio T."/>
            <person name="Dalin E."/>
            <person name="Tice H."/>
            <person name="Bruce D."/>
            <person name="Goodwin L."/>
            <person name="Pitluck S."/>
            <person name="Sims D."/>
            <person name="Brettin T."/>
            <person name="Detter J.C."/>
            <person name="Han C."/>
            <person name="Larimer F."/>
            <person name="Land M."/>
            <person name="Hauser L."/>
            <person name="Kyrpides N."/>
            <person name="Ivanova N."/>
            <person name="Marx C.J."/>
            <person name="Richardson P."/>
        </authorList>
    </citation>
    <scope>NUCLEOTIDE SEQUENCE [LARGE SCALE GENOMIC DNA]</scope>
    <source>
        <strain>LMG 21967 / CNCM I-2342 / ORS 2060</strain>
    </source>
</reference>
<keyword id="KW-0169">Cobalamin biosynthesis</keyword>
<keyword id="KW-0315">Glutamine amidotransferase</keyword>
<keyword id="KW-1185">Reference proteome</keyword>